<dbReference type="EMBL" id="BX284604">
    <property type="protein sequence ID" value="CAO78745.1"/>
    <property type="molecule type" value="Genomic_DNA"/>
</dbReference>
<dbReference type="RefSeq" id="NP_001255569.1">
    <property type="nucleotide sequence ID" value="NM_001268640.2"/>
</dbReference>
<dbReference type="FunCoup" id="A6ZJ71">
    <property type="interactions" value="1525"/>
</dbReference>
<dbReference type="IntAct" id="A6ZJ71">
    <property type="interactions" value="1"/>
</dbReference>
<dbReference type="STRING" id="6239.F40F11.2.1"/>
<dbReference type="iPTMnet" id="A6ZJ71"/>
<dbReference type="PaxDb" id="6239-F40F11.2"/>
<dbReference type="PeptideAtlas" id="A6ZJ71"/>
<dbReference type="EnsemblMetazoa" id="F40F11.2.1">
    <property type="protein sequence ID" value="F40F11.2.1"/>
    <property type="gene ID" value="WBGene00009587"/>
</dbReference>
<dbReference type="GeneID" id="178082"/>
<dbReference type="KEGG" id="cel:CELE_F40F11.2"/>
<dbReference type="UCSC" id="F40F11.2b">
    <property type="organism name" value="c. elegans"/>
</dbReference>
<dbReference type="AGR" id="WB:WBGene00009587"/>
<dbReference type="CTD" id="178082"/>
<dbReference type="WormBase" id="F40F11.2">
    <property type="protein sequence ID" value="CE28557"/>
    <property type="gene ID" value="WBGene00009587"/>
    <property type="gene designation" value="mig-38"/>
</dbReference>
<dbReference type="eggNOG" id="ENOG502QU2K">
    <property type="taxonomic scope" value="Eukaryota"/>
</dbReference>
<dbReference type="HOGENOM" id="CLU_244034_0_0_1"/>
<dbReference type="InParanoid" id="A6ZJ71"/>
<dbReference type="OMA" id="FEMPTVI"/>
<dbReference type="OrthoDB" id="5844650at2759"/>
<dbReference type="PRO" id="PR:A6ZJ71"/>
<dbReference type="Proteomes" id="UP000001940">
    <property type="component" value="Chromosome IV"/>
</dbReference>
<dbReference type="Bgee" id="WBGene00009587">
    <property type="expression patterns" value="Expressed in pharyngeal muscle cell (C elegans) and 4 other cell types or tissues"/>
</dbReference>
<dbReference type="GO" id="GO:0005737">
    <property type="term" value="C:cytoplasm"/>
    <property type="evidence" value="ECO:0007669"/>
    <property type="project" value="UniProtKB-SubCell"/>
</dbReference>
<dbReference type="GO" id="GO:0005634">
    <property type="term" value="C:nucleus"/>
    <property type="evidence" value="ECO:0007669"/>
    <property type="project" value="UniProtKB-SubCell"/>
</dbReference>
<dbReference type="GO" id="GO:0005507">
    <property type="term" value="F:copper ion binding"/>
    <property type="evidence" value="ECO:0007669"/>
    <property type="project" value="InterPro"/>
</dbReference>
<dbReference type="GO" id="GO:0008131">
    <property type="term" value="F:primary methylamine oxidase activity"/>
    <property type="evidence" value="ECO:0007669"/>
    <property type="project" value="InterPro"/>
</dbReference>
<dbReference type="GO" id="GO:0048038">
    <property type="term" value="F:quinone binding"/>
    <property type="evidence" value="ECO:0007669"/>
    <property type="project" value="InterPro"/>
</dbReference>
<dbReference type="GO" id="GO:0009308">
    <property type="term" value="P:amine metabolic process"/>
    <property type="evidence" value="ECO:0007669"/>
    <property type="project" value="InterPro"/>
</dbReference>
<dbReference type="InterPro" id="IPR016182">
    <property type="entry name" value="Cu_amine_oxidase_N-reg"/>
</dbReference>
<dbReference type="InterPro" id="IPR015671">
    <property type="entry name" value="GSCR1_dom"/>
</dbReference>
<dbReference type="Pfam" id="PF15249">
    <property type="entry name" value="GLTSCR1"/>
    <property type="match status" value="1"/>
</dbReference>
<dbReference type="SUPFAM" id="SSF54416">
    <property type="entry name" value="Amine oxidase N-terminal region"/>
    <property type="match status" value="1"/>
</dbReference>
<protein>
    <recommendedName>
        <fullName evidence="5">Abnormal cell migration protein 38</fullName>
    </recommendedName>
</protein>
<name>MIG38_CAEEL</name>
<organism evidence="4">
    <name type="scientific">Caenorhabditis elegans</name>
    <dbReference type="NCBI Taxonomy" id="6239"/>
    <lineage>
        <taxon>Eukaryota</taxon>
        <taxon>Metazoa</taxon>
        <taxon>Ecdysozoa</taxon>
        <taxon>Nematoda</taxon>
        <taxon>Chromadorea</taxon>
        <taxon>Rhabditida</taxon>
        <taxon>Rhabditina</taxon>
        <taxon>Rhabditomorpha</taxon>
        <taxon>Rhabditoidea</taxon>
        <taxon>Rhabditidae</taxon>
        <taxon>Peloderinae</taxon>
        <taxon>Caenorhabditis</taxon>
    </lineage>
</organism>
<feature type="chain" id="PRO_0000437886" description="Abnormal cell migration protein 38" evidence="3">
    <location>
        <begin position="1"/>
        <end position="1607"/>
    </location>
</feature>
<feature type="region of interest" description="Disordered" evidence="1">
    <location>
        <begin position="14"/>
        <end position="52"/>
    </location>
</feature>
<feature type="region of interest" description="Disordered" evidence="1">
    <location>
        <begin position="67"/>
        <end position="93"/>
    </location>
</feature>
<feature type="region of interest" description="Disordered" evidence="1">
    <location>
        <begin position="167"/>
        <end position="222"/>
    </location>
</feature>
<feature type="region of interest" description="Disordered" evidence="1">
    <location>
        <begin position="326"/>
        <end position="425"/>
    </location>
</feature>
<feature type="region of interest" description="Disordered" evidence="1">
    <location>
        <begin position="459"/>
        <end position="478"/>
    </location>
</feature>
<feature type="region of interest" description="Disordered" evidence="1">
    <location>
        <begin position="549"/>
        <end position="594"/>
    </location>
</feature>
<feature type="region of interest" description="Disordered" evidence="1">
    <location>
        <begin position="845"/>
        <end position="931"/>
    </location>
</feature>
<feature type="region of interest" description="Disordered" evidence="1">
    <location>
        <begin position="1017"/>
        <end position="1061"/>
    </location>
</feature>
<feature type="region of interest" description="Disordered" evidence="1">
    <location>
        <begin position="1141"/>
        <end position="1241"/>
    </location>
</feature>
<feature type="region of interest" description="Disordered" evidence="1">
    <location>
        <begin position="1319"/>
        <end position="1378"/>
    </location>
</feature>
<feature type="region of interest" description="Disordered" evidence="1">
    <location>
        <begin position="1392"/>
        <end position="1445"/>
    </location>
</feature>
<feature type="region of interest" description="Disordered" evidence="1">
    <location>
        <begin position="1517"/>
        <end position="1607"/>
    </location>
</feature>
<feature type="compositionally biased region" description="Polar residues" evidence="1">
    <location>
        <begin position="81"/>
        <end position="93"/>
    </location>
</feature>
<feature type="compositionally biased region" description="Polar residues" evidence="1">
    <location>
        <begin position="179"/>
        <end position="191"/>
    </location>
</feature>
<feature type="compositionally biased region" description="Low complexity" evidence="1">
    <location>
        <begin position="195"/>
        <end position="205"/>
    </location>
</feature>
<feature type="compositionally biased region" description="Basic residues" evidence="1">
    <location>
        <begin position="206"/>
        <end position="218"/>
    </location>
</feature>
<feature type="compositionally biased region" description="Low complexity" evidence="1">
    <location>
        <begin position="327"/>
        <end position="341"/>
    </location>
</feature>
<feature type="compositionally biased region" description="Polar residues" evidence="1">
    <location>
        <begin position="349"/>
        <end position="371"/>
    </location>
</feature>
<feature type="compositionally biased region" description="Polar residues" evidence="1">
    <location>
        <begin position="379"/>
        <end position="425"/>
    </location>
</feature>
<feature type="compositionally biased region" description="Low complexity" evidence="1">
    <location>
        <begin position="585"/>
        <end position="594"/>
    </location>
</feature>
<feature type="compositionally biased region" description="Acidic residues" evidence="1">
    <location>
        <begin position="858"/>
        <end position="871"/>
    </location>
</feature>
<feature type="compositionally biased region" description="Basic and acidic residues" evidence="1">
    <location>
        <begin position="872"/>
        <end position="886"/>
    </location>
</feature>
<feature type="compositionally biased region" description="Basic and acidic residues" evidence="1">
    <location>
        <begin position="907"/>
        <end position="917"/>
    </location>
</feature>
<feature type="compositionally biased region" description="Low complexity" evidence="1">
    <location>
        <begin position="1333"/>
        <end position="1354"/>
    </location>
</feature>
<feature type="compositionally biased region" description="Low complexity" evidence="1">
    <location>
        <begin position="1395"/>
        <end position="1419"/>
    </location>
</feature>
<feature type="compositionally biased region" description="Low complexity" evidence="1">
    <location>
        <begin position="1584"/>
        <end position="1601"/>
    </location>
</feature>
<gene>
    <name evidence="5" type="primary">mig-38</name>
    <name evidence="5" type="ORF">F40F11.2</name>
</gene>
<proteinExistence type="evidence at transcript level"/>
<keyword id="KW-0963">Cytoplasm</keyword>
<keyword id="KW-0217">Developmental protein</keyword>
<keyword id="KW-0539">Nucleus</keyword>
<keyword id="KW-1185">Reference proteome</keyword>
<evidence type="ECO:0000256" key="1">
    <source>
        <dbReference type="SAM" id="MobiDB-lite"/>
    </source>
</evidence>
<evidence type="ECO:0000269" key="2">
    <source>
    </source>
</evidence>
<evidence type="ECO:0000305" key="3"/>
<evidence type="ECO:0000312" key="4">
    <source>
        <dbReference type="Proteomes" id="UP000001940"/>
    </source>
</evidence>
<evidence type="ECO:0000312" key="5">
    <source>
        <dbReference type="WormBase" id="F40F11.2"/>
    </source>
</evidence>
<sequence length="1607" mass="179686">MSYEEDDWFSYRTEFNKRADSPRAAGNYDFESGNIDNIPLNDDGPLSPSQDFDLAGTLEEYESYDLRLSPNGGLNREDQQPGPSGNNDGQYHVMQNNDSFAQHMQSSNTIEYNSFEMPTVINSNHDVGPYQDLGIDDPNSFYANQQPSTSQGNDMIINENYEMMGPSTSYMPQIDHMNPSGNSSSQINHQQGMIVPQVQQQPAKPKTTKKRPPPKKKTAAQAPDTVGTVLTKVNKLTQQIDNNNDNQEQKIETRISAEDLVRVSALLSRLDVYQKEQAQGNNTHDQDIEALQAEIAQVFTKNMAMSANDAPGNSILSQIQNLTSIGSSASSSAQPSQPAKKAAPKRKTVPNTAKNLAQNQQIMPPQAQITPTKLVMDPPTTTMVPSSSQSNHMYSNDGFTTYNQMDEPGTSQQQQYNDYRQPPSQESMQYGHQQIIQARVVPSMNQKTHNYRQAVVFASPNTNGPSSQLQRPQSGMDQMQDQQYHAQDLQGSQVQQTFVSVQHDGQIYQEVEPTLRDFVRQGRYQGPQDAPHLRQQLITNVNATTNKQMVHRSQDPTPSPGNLQQFGEPLQRHGSYPHSHDMRPNSHSQSQHSYSNHYDGATEFFDVSMQHQDSQMSQIQPGSQHYVQQQELYHPIGDQQQMVEPESEYPVPQVTNELSEEELRAIMEEKRQIRQKRLKDIMIDQLNRLEEPVDVTPFRNKMDVLERLLPYHHFANEEEPVSDFDSTFQRVMDNAVHQANSIGNRIRNIVLRDTMRSSTEWEENMILFLETESERRKLEDDKKLADQDLSTFLRNSDIIQNVRARRLDVERTRLRVPRIPAHLKELDLQNGQLSSLYREYEFDSYDENRPRGSPFVYEEPESESESEPEAEPEPKKDNFAEPEPARGDISPLIGFPQLSPIPSPSRYRNESESTFDWKDEDESPLLSPETEKINKAADQFRKEIFGTQEDLDKSEPFPFEQISEAARNQHLITAQPQLPRVDASSIGSLASSSSTVDHSPQSIHPVFSPKAAIQSSSVQVMKPPRSPSSVSCKLSTPCVEQSLPEESHYEGSPEIDEDYDMSPIRENEPAELISLPISVNMIKKEKEDSTPKLKLRIPAAVLQNGIVASEDESDVAVEETIPAIRKPLKLRFNLKDIKLEEPSPDRDVASSRPKSRTEPPPTPEKLHVKIKASPAETTPTKLQLKEKSPAKTPVFKTPLQTPIKMTPSPSESRKRRSAKIEDSPAQKKKLLNSGSSFVTPKNGLRAELDETVERPLRIMTDGRKIVMKISKVSRNINHFVTPRRDKKGNLHKDLSPTNYTRLTMKLMKKKGELSVEFTETPNKNSEEDDHKIPNIPSTSTSIPPASTVVSSVSVKGRPAPASRKSSIDTAGKDKKGQLAKNKAAFCNRFNPFANVPSSKPSTSSAVSATPSTSSAVSAKLPTGKTPGRPVALSTPRSSHKPPQAVVAPRPNLIRTAPVVPKITVTNASESSLPSKSHIPIEVKPKLSSLLPWVSDTDESPEQKHKLKKTMPSINLLKVKTEPPEADAVTSKPESPRASSSMSFFEDAFLRSPKRSNEPLPVVEFSDDEENDLAHSTFSHATDHLLGTSNMNSSTNGSSSGLPWSTDP</sequence>
<accession>A6ZJ71</accession>
<comment type="function">
    <text evidence="2">During gonad development, involved in distal tip cell (DTC) migration from the dorsal side of the hermaphrodite body to the midbody which allows for the formation of gonad arms. Role in gonad DTC migration may be in association with integrin related proteins ina-1 and mig-15.</text>
</comment>
<comment type="subcellular location">
    <subcellularLocation>
        <location evidence="2">Nucleus</location>
    </subcellularLocation>
    <subcellularLocation>
        <location evidence="2">Cytoplasm</location>
    </subcellularLocation>
</comment>
<comment type="tissue specificity">
    <text evidence="2">Expressed in gonad distal tip cells and gonad sheath cells.</text>
</comment>
<comment type="developmental stage">
    <text evidence="2">Expressed in somatic gonad precursors Z1 and Z4 in the gonad primordium and later in distal tip cells during the larval stages.</text>
</comment>
<comment type="disruption phenotype">
    <text evidence="2">Embryonic lethal. RNAi-mediated knockdown results in gonad distal tip cell (DTC) migration defects whereby DTCs do not migrate to the midbody of the hermaphrodite and as a consequence this leads to abnormal gonadal arm formation during gonad morphogenesis. RNAi-mediated knockdown specifically in gonad DTCs also result in a DTC migration defect in which DTCs migrate away from the hermaphrodite midbody on the dorsal basement membrane. RNAi-mediated knockdown in a unc-6 mutant background results in failed gonad DTC migration to the midbody of the hermaphrodite. RNAi-mediated knockdown with ina-1, mig-15 or talin in an rrf-3 mutant background results in enhanced gonad DTC migration.</text>
</comment>
<reference evidence="4" key="1">
    <citation type="journal article" date="1998" name="Science">
        <title>Genome sequence of the nematode C. elegans: a platform for investigating biology.</title>
        <authorList>
            <consortium name="The C. elegans sequencing consortium"/>
        </authorList>
    </citation>
    <scope>NUCLEOTIDE SEQUENCE [LARGE SCALE GENOMIC DNA]</scope>
    <source>
        <strain evidence="4">Bristol N2</strain>
    </source>
</reference>
<reference evidence="3" key="2">
    <citation type="journal article" date="2012" name="Dev. Biol.">
        <title>mig-38, a novel gene that regulates distal tip cell turning during gonadogenesis in C. elegans hermaphrodites.</title>
        <authorList>
            <person name="Martynovsky M."/>
            <person name="Wong M.C."/>
            <person name="Byrd D.T."/>
            <person name="Kimble J."/>
            <person name="Schwarzbauer J.E."/>
        </authorList>
    </citation>
    <scope>FUNCTION</scope>
    <scope>SUBCELLULAR LOCATION</scope>
    <scope>TISSUE SPECIFICITY</scope>
    <scope>DEVELOPMENTAL STAGE</scope>
    <scope>DISRUPTION PHENOTYPE</scope>
</reference>